<gene>
    <name evidence="1" type="primary">pdxB</name>
    <name type="ordered locus">YPN_2183</name>
    <name type="ORF">YP516_2443</name>
</gene>
<evidence type="ECO:0000255" key="1">
    <source>
        <dbReference type="HAMAP-Rule" id="MF_01825"/>
    </source>
</evidence>
<evidence type="ECO:0000305" key="2"/>
<feature type="chain" id="PRO_0000297483" description="Erythronate-4-phosphate dehydrogenase">
    <location>
        <begin position="1"/>
        <end position="375"/>
    </location>
</feature>
<feature type="active site" evidence="1">
    <location>
        <position position="208"/>
    </location>
</feature>
<feature type="active site" evidence="1">
    <location>
        <position position="237"/>
    </location>
</feature>
<feature type="active site" description="Proton donor" evidence="1">
    <location>
        <position position="254"/>
    </location>
</feature>
<feature type="binding site" evidence="1">
    <location>
        <position position="45"/>
    </location>
    <ligand>
        <name>substrate</name>
    </ligand>
</feature>
<feature type="binding site" evidence="1">
    <location>
        <position position="66"/>
    </location>
    <ligand>
        <name>substrate</name>
    </ligand>
</feature>
<feature type="binding site" evidence="1">
    <location>
        <position position="146"/>
    </location>
    <ligand>
        <name>NAD(+)</name>
        <dbReference type="ChEBI" id="CHEBI:57540"/>
    </ligand>
</feature>
<feature type="binding site" evidence="1">
    <location>
        <position position="175"/>
    </location>
    <ligand>
        <name>NAD(+)</name>
        <dbReference type="ChEBI" id="CHEBI:57540"/>
    </ligand>
</feature>
<feature type="binding site" evidence="1">
    <location>
        <position position="232"/>
    </location>
    <ligand>
        <name>NAD(+)</name>
        <dbReference type="ChEBI" id="CHEBI:57540"/>
    </ligand>
</feature>
<feature type="binding site" evidence="1">
    <location>
        <position position="257"/>
    </location>
    <ligand>
        <name>NAD(+)</name>
        <dbReference type="ChEBI" id="CHEBI:57540"/>
    </ligand>
</feature>
<feature type="binding site" evidence="1">
    <location>
        <position position="258"/>
    </location>
    <ligand>
        <name>substrate</name>
    </ligand>
</feature>
<sequence>MKILVDENMPYAEELFRRLGDVQAVPGRPIPRDALVDADALMVRSVTKVNEALLHGTSIGFVGTATAGTDHVDDTWLRQQGIGFSAAPGCNAIAVVEYVFSALMMMAERDGFQLRDKTVGIIGVGNVGSRLNARLQALGVRTLLCDPPRADRGDNEAFWPLEKLVREADVLTFHTPLNKTGAYQSLHMADDELLAALPDGRILINACRGAVVDNAALLRALEKGKKLSVVLDVWEPEPDLSLPLLARVDIGTPHIAGYTLEGKARGTTQVFEAFSQHLGQPQSVELASLLPVPEFSHLRLNGELDEGKLKRLMHLVYDVRRDDAPLRHVAGLPGEFDRLRKHYQERREWSSLCVQCDDATSAGLLQQLGFTTQLL</sequence>
<name>PDXB_YERPN</name>
<reference key="1">
    <citation type="journal article" date="2006" name="J. Bacteriol.">
        <title>Complete genome sequence of Yersinia pestis strains Antiqua and Nepal516: evidence of gene reduction in an emerging pathogen.</title>
        <authorList>
            <person name="Chain P.S.G."/>
            <person name="Hu P."/>
            <person name="Malfatti S.A."/>
            <person name="Radnedge L."/>
            <person name="Larimer F."/>
            <person name="Vergez L.M."/>
            <person name="Worsham P."/>
            <person name="Chu M.C."/>
            <person name="Andersen G.L."/>
        </authorList>
    </citation>
    <scope>NUCLEOTIDE SEQUENCE [LARGE SCALE GENOMIC DNA]</scope>
    <source>
        <strain>Nepal516</strain>
    </source>
</reference>
<reference key="2">
    <citation type="submission" date="2009-04" db="EMBL/GenBank/DDBJ databases">
        <title>Yersinia pestis Nepal516A whole genome shotgun sequencing project.</title>
        <authorList>
            <person name="Plunkett G. III"/>
            <person name="Anderson B.D."/>
            <person name="Baumler D.J."/>
            <person name="Burland V."/>
            <person name="Cabot E.L."/>
            <person name="Glasner J.D."/>
            <person name="Mau B."/>
            <person name="Neeno-Eckwall E."/>
            <person name="Perna N.T."/>
            <person name="Munk A.C."/>
            <person name="Tapia R."/>
            <person name="Green L.D."/>
            <person name="Rogers Y.C."/>
            <person name="Detter J.C."/>
            <person name="Bruce D.C."/>
            <person name="Brettin T.S."/>
        </authorList>
    </citation>
    <scope>NUCLEOTIDE SEQUENCE [LARGE SCALE GENOMIC DNA]</scope>
    <source>
        <strain>Nepal516</strain>
    </source>
</reference>
<proteinExistence type="inferred from homology"/>
<dbReference type="EC" id="1.1.1.290" evidence="1"/>
<dbReference type="EMBL" id="CP000305">
    <property type="protein sequence ID" value="ABG18512.1"/>
    <property type="status" value="ALT_INIT"/>
    <property type="molecule type" value="Genomic_DNA"/>
</dbReference>
<dbReference type="EMBL" id="ACNQ01000013">
    <property type="protein sequence ID" value="EEO76246.1"/>
    <property type="molecule type" value="Genomic_DNA"/>
</dbReference>
<dbReference type="RefSeq" id="WP_002209725.1">
    <property type="nucleotide sequence ID" value="NZ_ACNQ01000013.1"/>
</dbReference>
<dbReference type="SMR" id="Q1CHL8"/>
<dbReference type="GeneID" id="57975926"/>
<dbReference type="KEGG" id="ypn:YPN_2183"/>
<dbReference type="HOGENOM" id="CLU_019796_4_0_6"/>
<dbReference type="UniPathway" id="UPA00244">
    <property type="reaction ID" value="UER00310"/>
</dbReference>
<dbReference type="Proteomes" id="UP000008936">
    <property type="component" value="Chromosome"/>
</dbReference>
<dbReference type="GO" id="GO:0005829">
    <property type="term" value="C:cytosol"/>
    <property type="evidence" value="ECO:0007669"/>
    <property type="project" value="TreeGrafter"/>
</dbReference>
<dbReference type="GO" id="GO:0033711">
    <property type="term" value="F:4-phosphoerythronate dehydrogenase activity"/>
    <property type="evidence" value="ECO:0007669"/>
    <property type="project" value="UniProtKB-EC"/>
</dbReference>
<dbReference type="GO" id="GO:0051287">
    <property type="term" value="F:NAD binding"/>
    <property type="evidence" value="ECO:0007669"/>
    <property type="project" value="InterPro"/>
</dbReference>
<dbReference type="GO" id="GO:0046983">
    <property type="term" value="F:protein dimerization activity"/>
    <property type="evidence" value="ECO:0007669"/>
    <property type="project" value="InterPro"/>
</dbReference>
<dbReference type="GO" id="GO:0036001">
    <property type="term" value="P:'de novo' pyridoxal 5'-phosphate biosynthetic process"/>
    <property type="evidence" value="ECO:0007669"/>
    <property type="project" value="TreeGrafter"/>
</dbReference>
<dbReference type="GO" id="GO:0008615">
    <property type="term" value="P:pyridoxine biosynthetic process"/>
    <property type="evidence" value="ECO:0007669"/>
    <property type="project" value="UniProtKB-UniRule"/>
</dbReference>
<dbReference type="CDD" id="cd12158">
    <property type="entry name" value="ErythrP_dh"/>
    <property type="match status" value="1"/>
</dbReference>
<dbReference type="FunFam" id="3.30.1370.170:FF:000001">
    <property type="entry name" value="Erythronate-4-phosphate dehydrogenase"/>
    <property type="match status" value="1"/>
</dbReference>
<dbReference type="FunFam" id="3.40.50.720:FF:000093">
    <property type="entry name" value="Erythronate-4-phosphate dehydrogenase"/>
    <property type="match status" value="1"/>
</dbReference>
<dbReference type="Gene3D" id="3.30.1370.170">
    <property type="match status" value="1"/>
</dbReference>
<dbReference type="Gene3D" id="3.40.50.720">
    <property type="entry name" value="NAD(P)-binding Rossmann-like Domain"/>
    <property type="match status" value="2"/>
</dbReference>
<dbReference type="HAMAP" id="MF_01825">
    <property type="entry name" value="PdxB"/>
    <property type="match status" value="1"/>
</dbReference>
<dbReference type="InterPro" id="IPR006139">
    <property type="entry name" value="D-isomer_2_OHA_DH_cat_dom"/>
</dbReference>
<dbReference type="InterPro" id="IPR029753">
    <property type="entry name" value="D-isomer_DH_CS"/>
</dbReference>
<dbReference type="InterPro" id="IPR029752">
    <property type="entry name" value="D-isomer_DH_CS1"/>
</dbReference>
<dbReference type="InterPro" id="IPR006140">
    <property type="entry name" value="D-isomer_DH_NAD-bd"/>
</dbReference>
<dbReference type="InterPro" id="IPR020921">
    <property type="entry name" value="Erythronate-4-P_DHase"/>
</dbReference>
<dbReference type="InterPro" id="IPR024531">
    <property type="entry name" value="Erythronate-4-P_DHase_dimer"/>
</dbReference>
<dbReference type="InterPro" id="IPR036291">
    <property type="entry name" value="NAD(P)-bd_dom_sf"/>
</dbReference>
<dbReference type="InterPro" id="IPR038251">
    <property type="entry name" value="PdxB_dimer_sf"/>
</dbReference>
<dbReference type="NCBIfam" id="NF001309">
    <property type="entry name" value="PRK00257.1"/>
    <property type="match status" value="1"/>
</dbReference>
<dbReference type="PANTHER" id="PTHR42938">
    <property type="entry name" value="FORMATE DEHYDROGENASE 1"/>
    <property type="match status" value="1"/>
</dbReference>
<dbReference type="PANTHER" id="PTHR42938:SF9">
    <property type="entry name" value="FORMATE DEHYDROGENASE 1"/>
    <property type="match status" value="1"/>
</dbReference>
<dbReference type="Pfam" id="PF00389">
    <property type="entry name" value="2-Hacid_dh"/>
    <property type="match status" value="1"/>
</dbReference>
<dbReference type="Pfam" id="PF02826">
    <property type="entry name" value="2-Hacid_dh_C"/>
    <property type="match status" value="1"/>
</dbReference>
<dbReference type="Pfam" id="PF11890">
    <property type="entry name" value="DUF3410"/>
    <property type="match status" value="1"/>
</dbReference>
<dbReference type="SUPFAM" id="SSF52283">
    <property type="entry name" value="Formate/glycerate dehydrogenase catalytic domain-like"/>
    <property type="match status" value="1"/>
</dbReference>
<dbReference type="SUPFAM" id="SSF51735">
    <property type="entry name" value="NAD(P)-binding Rossmann-fold domains"/>
    <property type="match status" value="1"/>
</dbReference>
<dbReference type="PROSITE" id="PS00065">
    <property type="entry name" value="D_2_HYDROXYACID_DH_1"/>
    <property type="match status" value="1"/>
</dbReference>
<dbReference type="PROSITE" id="PS00671">
    <property type="entry name" value="D_2_HYDROXYACID_DH_3"/>
    <property type="match status" value="1"/>
</dbReference>
<keyword id="KW-0963">Cytoplasm</keyword>
<keyword id="KW-0520">NAD</keyword>
<keyword id="KW-0560">Oxidoreductase</keyword>
<keyword id="KW-0664">Pyridoxine biosynthesis</keyword>
<accession>Q1CHL8</accession>
<accession>C4GU59</accession>
<comment type="function">
    <text evidence="1">Catalyzes the oxidation of erythronate-4-phosphate to 3-hydroxy-2-oxo-4-phosphonooxybutanoate.</text>
</comment>
<comment type="catalytic activity">
    <reaction evidence="1">
        <text>4-phospho-D-erythronate + NAD(+) = (R)-3-hydroxy-2-oxo-4-phosphooxybutanoate + NADH + H(+)</text>
        <dbReference type="Rhea" id="RHEA:18829"/>
        <dbReference type="ChEBI" id="CHEBI:15378"/>
        <dbReference type="ChEBI" id="CHEBI:57540"/>
        <dbReference type="ChEBI" id="CHEBI:57945"/>
        <dbReference type="ChEBI" id="CHEBI:58538"/>
        <dbReference type="ChEBI" id="CHEBI:58766"/>
        <dbReference type="EC" id="1.1.1.290"/>
    </reaction>
</comment>
<comment type="pathway">
    <text evidence="1">Cofactor biosynthesis; pyridoxine 5'-phosphate biosynthesis; pyridoxine 5'-phosphate from D-erythrose 4-phosphate: step 2/5.</text>
</comment>
<comment type="subunit">
    <text evidence="1">Homodimer.</text>
</comment>
<comment type="subcellular location">
    <subcellularLocation>
        <location evidence="1">Cytoplasm</location>
    </subcellularLocation>
</comment>
<comment type="similarity">
    <text evidence="1">Belongs to the D-isomer specific 2-hydroxyacid dehydrogenase family. PdxB subfamily.</text>
</comment>
<comment type="sequence caution" evidence="2">
    <conflict type="erroneous initiation">
        <sequence resource="EMBL-CDS" id="ABG18512"/>
    </conflict>
</comment>
<protein>
    <recommendedName>
        <fullName evidence="1">Erythronate-4-phosphate dehydrogenase</fullName>
        <ecNumber evidence="1">1.1.1.290</ecNumber>
    </recommendedName>
</protein>
<organism>
    <name type="scientific">Yersinia pestis bv. Antiqua (strain Nepal516)</name>
    <dbReference type="NCBI Taxonomy" id="377628"/>
    <lineage>
        <taxon>Bacteria</taxon>
        <taxon>Pseudomonadati</taxon>
        <taxon>Pseudomonadota</taxon>
        <taxon>Gammaproteobacteria</taxon>
        <taxon>Enterobacterales</taxon>
        <taxon>Yersiniaceae</taxon>
        <taxon>Yersinia</taxon>
    </lineage>
</organism>